<accession>Q3SLQ2</accession>
<dbReference type="EMBL" id="CP000116">
    <property type="protein sequence ID" value="AAZ96355.1"/>
    <property type="molecule type" value="Genomic_DNA"/>
</dbReference>
<dbReference type="RefSeq" id="WP_011310915.1">
    <property type="nucleotide sequence ID" value="NC_007404.1"/>
</dbReference>
<dbReference type="SMR" id="Q3SLQ2"/>
<dbReference type="STRING" id="292415.Tbd_0402"/>
<dbReference type="KEGG" id="tbd:Tbd_0402"/>
<dbReference type="eggNOG" id="COG0480">
    <property type="taxonomic scope" value="Bacteria"/>
</dbReference>
<dbReference type="HOGENOM" id="CLU_002794_4_1_4"/>
<dbReference type="OrthoDB" id="9804431at2"/>
<dbReference type="Proteomes" id="UP000008291">
    <property type="component" value="Chromosome"/>
</dbReference>
<dbReference type="GO" id="GO:0005737">
    <property type="term" value="C:cytoplasm"/>
    <property type="evidence" value="ECO:0007669"/>
    <property type="project" value="UniProtKB-SubCell"/>
</dbReference>
<dbReference type="GO" id="GO:0005525">
    <property type="term" value="F:GTP binding"/>
    <property type="evidence" value="ECO:0007669"/>
    <property type="project" value="UniProtKB-UniRule"/>
</dbReference>
<dbReference type="GO" id="GO:0003924">
    <property type="term" value="F:GTPase activity"/>
    <property type="evidence" value="ECO:0007669"/>
    <property type="project" value="InterPro"/>
</dbReference>
<dbReference type="GO" id="GO:0097216">
    <property type="term" value="F:guanosine tetraphosphate binding"/>
    <property type="evidence" value="ECO:0007669"/>
    <property type="project" value="UniProtKB-ARBA"/>
</dbReference>
<dbReference type="GO" id="GO:0003746">
    <property type="term" value="F:translation elongation factor activity"/>
    <property type="evidence" value="ECO:0007669"/>
    <property type="project" value="UniProtKB-UniRule"/>
</dbReference>
<dbReference type="GO" id="GO:0032790">
    <property type="term" value="P:ribosome disassembly"/>
    <property type="evidence" value="ECO:0007669"/>
    <property type="project" value="TreeGrafter"/>
</dbReference>
<dbReference type="CDD" id="cd01886">
    <property type="entry name" value="EF-G"/>
    <property type="match status" value="1"/>
</dbReference>
<dbReference type="CDD" id="cd16262">
    <property type="entry name" value="EFG_III"/>
    <property type="match status" value="1"/>
</dbReference>
<dbReference type="CDD" id="cd01434">
    <property type="entry name" value="EFG_mtEFG1_IV"/>
    <property type="match status" value="1"/>
</dbReference>
<dbReference type="CDD" id="cd03713">
    <property type="entry name" value="EFG_mtEFG_C"/>
    <property type="match status" value="1"/>
</dbReference>
<dbReference type="CDD" id="cd04088">
    <property type="entry name" value="EFG_mtEFG_II"/>
    <property type="match status" value="1"/>
</dbReference>
<dbReference type="FunFam" id="2.40.30.10:FF:000006">
    <property type="entry name" value="Elongation factor G"/>
    <property type="match status" value="1"/>
</dbReference>
<dbReference type="FunFam" id="3.30.230.10:FF:000003">
    <property type="entry name" value="Elongation factor G"/>
    <property type="match status" value="1"/>
</dbReference>
<dbReference type="FunFam" id="3.30.70.240:FF:000001">
    <property type="entry name" value="Elongation factor G"/>
    <property type="match status" value="1"/>
</dbReference>
<dbReference type="FunFam" id="3.30.70.870:FF:000001">
    <property type="entry name" value="Elongation factor G"/>
    <property type="match status" value="1"/>
</dbReference>
<dbReference type="FunFam" id="3.40.50.300:FF:000029">
    <property type="entry name" value="Elongation factor G"/>
    <property type="match status" value="1"/>
</dbReference>
<dbReference type="Gene3D" id="3.30.230.10">
    <property type="match status" value="1"/>
</dbReference>
<dbReference type="Gene3D" id="3.30.70.240">
    <property type="match status" value="1"/>
</dbReference>
<dbReference type="Gene3D" id="3.30.70.870">
    <property type="entry name" value="Elongation Factor G (Translational Gtpase), domain 3"/>
    <property type="match status" value="1"/>
</dbReference>
<dbReference type="Gene3D" id="3.40.50.300">
    <property type="entry name" value="P-loop containing nucleotide triphosphate hydrolases"/>
    <property type="match status" value="1"/>
</dbReference>
<dbReference type="Gene3D" id="2.40.30.10">
    <property type="entry name" value="Translation factors"/>
    <property type="match status" value="1"/>
</dbReference>
<dbReference type="HAMAP" id="MF_00054_B">
    <property type="entry name" value="EF_G_EF_2_B"/>
    <property type="match status" value="1"/>
</dbReference>
<dbReference type="InterPro" id="IPR041095">
    <property type="entry name" value="EFG_II"/>
</dbReference>
<dbReference type="InterPro" id="IPR009022">
    <property type="entry name" value="EFG_III"/>
</dbReference>
<dbReference type="InterPro" id="IPR035647">
    <property type="entry name" value="EFG_III/V"/>
</dbReference>
<dbReference type="InterPro" id="IPR047872">
    <property type="entry name" value="EFG_IV"/>
</dbReference>
<dbReference type="InterPro" id="IPR035649">
    <property type="entry name" value="EFG_V"/>
</dbReference>
<dbReference type="InterPro" id="IPR000640">
    <property type="entry name" value="EFG_V-like"/>
</dbReference>
<dbReference type="InterPro" id="IPR004161">
    <property type="entry name" value="EFTu-like_2"/>
</dbReference>
<dbReference type="InterPro" id="IPR031157">
    <property type="entry name" value="G_TR_CS"/>
</dbReference>
<dbReference type="InterPro" id="IPR027417">
    <property type="entry name" value="P-loop_NTPase"/>
</dbReference>
<dbReference type="InterPro" id="IPR020568">
    <property type="entry name" value="Ribosomal_Su5_D2-typ_SF"/>
</dbReference>
<dbReference type="InterPro" id="IPR014721">
    <property type="entry name" value="Ribsml_uS5_D2-typ_fold_subgr"/>
</dbReference>
<dbReference type="InterPro" id="IPR005225">
    <property type="entry name" value="Small_GTP-bd"/>
</dbReference>
<dbReference type="InterPro" id="IPR000795">
    <property type="entry name" value="T_Tr_GTP-bd_dom"/>
</dbReference>
<dbReference type="InterPro" id="IPR009000">
    <property type="entry name" value="Transl_B-barrel_sf"/>
</dbReference>
<dbReference type="InterPro" id="IPR004540">
    <property type="entry name" value="Transl_elong_EFG/EF2"/>
</dbReference>
<dbReference type="InterPro" id="IPR005517">
    <property type="entry name" value="Transl_elong_EFG/EF2_IV"/>
</dbReference>
<dbReference type="NCBIfam" id="TIGR00484">
    <property type="entry name" value="EF-G"/>
    <property type="match status" value="1"/>
</dbReference>
<dbReference type="NCBIfam" id="NF009379">
    <property type="entry name" value="PRK12740.1-3"/>
    <property type="match status" value="1"/>
</dbReference>
<dbReference type="NCBIfam" id="NF009381">
    <property type="entry name" value="PRK12740.1-5"/>
    <property type="match status" value="1"/>
</dbReference>
<dbReference type="NCBIfam" id="TIGR00231">
    <property type="entry name" value="small_GTP"/>
    <property type="match status" value="1"/>
</dbReference>
<dbReference type="PANTHER" id="PTHR43261:SF1">
    <property type="entry name" value="RIBOSOME-RELEASING FACTOR 2, MITOCHONDRIAL"/>
    <property type="match status" value="1"/>
</dbReference>
<dbReference type="PANTHER" id="PTHR43261">
    <property type="entry name" value="TRANSLATION ELONGATION FACTOR G-RELATED"/>
    <property type="match status" value="1"/>
</dbReference>
<dbReference type="Pfam" id="PF00679">
    <property type="entry name" value="EFG_C"/>
    <property type="match status" value="1"/>
</dbReference>
<dbReference type="Pfam" id="PF14492">
    <property type="entry name" value="EFG_III"/>
    <property type="match status" value="1"/>
</dbReference>
<dbReference type="Pfam" id="PF03764">
    <property type="entry name" value="EFG_IV"/>
    <property type="match status" value="1"/>
</dbReference>
<dbReference type="Pfam" id="PF00009">
    <property type="entry name" value="GTP_EFTU"/>
    <property type="match status" value="1"/>
</dbReference>
<dbReference type="Pfam" id="PF03144">
    <property type="entry name" value="GTP_EFTU_D2"/>
    <property type="match status" value="1"/>
</dbReference>
<dbReference type="PRINTS" id="PR00315">
    <property type="entry name" value="ELONGATNFCT"/>
</dbReference>
<dbReference type="SMART" id="SM00838">
    <property type="entry name" value="EFG_C"/>
    <property type="match status" value="1"/>
</dbReference>
<dbReference type="SMART" id="SM00889">
    <property type="entry name" value="EFG_IV"/>
    <property type="match status" value="1"/>
</dbReference>
<dbReference type="SUPFAM" id="SSF54980">
    <property type="entry name" value="EF-G C-terminal domain-like"/>
    <property type="match status" value="2"/>
</dbReference>
<dbReference type="SUPFAM" id="SSF52540">
    <property type="entry name" value="P-loop containing nucleoside triphosphate hydrolases"/>
    <property type="match status" value="1"/>
</dbReference>
<dbReference type="SUPFAM" id="SSF54211">
    <property type="entry name" value="Ribosomal protein S5 domain 2-like"/>
    <property type="match status" value="1"/>
</dbReference>
<dbReference type="SUPFAM" id="SSF50447">
    <property type="entry name" value="Translation proteins"/>
    <property type="match status" value="1"/>
</dbReference>
<dbReference type="PROSITE" id="PS00301">
    <property type="entry name" value="G_TR_1"/>
    <property type="match status" value="1"/>
</dbReference>
<dbReference type="PROSITE" id="PS51722">
    <property type="entry name" value="G_TR_2"/>
    <property type="match status" value="1"/>
</dbReference>
<evidence type="ECO:0000255" key="1">
    <source>
        <dbReference type="HAMAP-Rule" id="MF_00054"/>
    </source>
</evidence>
<feature type="chain" id="PRO_0000225246" description="Elongation factor G">
    <location>
        <begin position="1"/>
        <end position="696"/>
    </location>
</feature>
<feature type="domain" description="tr-type G">
    <location>
        <begin position="8"/>
        <end position="290"/>
    </location>
</feature>
<feature type="binding site" evidence="1">
    <location>
        <begin position="17"/>
        <end position="24"/>
    </location>
    <ligand>
        <name>GTP</name>
        <dbReference type="ChEBI" id="CHEBI:37565"/>
    </ligand>
</feature>
<feature type="binding site" evidence="1">
    <location>
        <begin position="88"/>
        <end position="92"/>
    </location>
    <ligand>
        <name>GTP</name>
        <dbReference type="ChEBI" id="CHEBI:37565"/>
    </ligand>
</feature>
<feature type="binding site" evidence="1">
    <location>
        <begin position="142"/>
        <end position="145"/>
    </location>
    <ligand>
        <name>GTP</name>
        <dbReference type="ChEBI" id="CHEBI:37565"/>
    </ligand>
</feature>
<comment type="function">
    <text evidence="1">Catalyzes the GTP-dependent ribosomal translocation step during translation elongation. During this step, the ribosome changes from the pre-translocational (PRE) to the post-translocational (POST) state as the newly formed A-site-bound peptidyl-tRNA and P-site-bound deacylated tRNA move to the P and E sites, respectively. Catalyzes the coordinated movement of the two tRNA molecules, the mRNA and conformational changes in the ribosome.</text>
</comment>
<comment type="subcellular location">
    <subcellularLocation>
        <location evidence="1">Cytoplasm</location>
    </subcellularLocation>
</comment>
<comment type="similarity">
    <text evidence="1">Belongs to the TRAFAC class translation factor GTPase superfamily. Classic translation factor GTPase family. EF-G/EF-2 subfamily.</text>
</comment>
<sequence>MARTTPIERYRNIGISAHIDAGKTTTTERILFYTGKSHKIGEVHDGAATMDWMEQEQERGITITSAATTCFWKGMDGKFPEHRINIIDTPGHVDFTIEVERSMRVLDGACMVYCAVGGVQPQSETVWRQANKYGVPRLAFVNKMDRSGADFFKVYEQMRARLKANPVPIQVPIGAEDKFEGVVDLVKMKAIYWDDASQGMKFDLRDIPANLVDTCKKWREAMLEAAAESSEELMNKYLEEGDLPEADIIAALRARTIASEIVPMMCGTAFKNKGVQAMLDKVIELMPAPTDIPPVKGELENGEAGERQATDEEKFSALAFKVATDPYVGQLIFFRVYSGVVNSGDTIYNPVKGRKERIGRILQMHANQREEIKEVRAGDIAAAVGLKDVTTGDTLCDLNAPITLERMEFPEPVIHVAVEPKTKADQEKMGIALGRLAQEDPSFRVRTDEESGQTIISGMGELHLEILVDRMKREFGVEANVGAPQVAYREAIRKEVEQEGKHAKQSGGKGQYGHVWIKMGPNEAGKGFEFIDAIKGGTVPREFIPAVEKGLREALNNGVLAGFPVVDVKVTLFDGSYHDVDSSELAFKLAAILAFKDGMRKASPVLLEPMMAVEVETPEDYMGDVMGDLNRRRGIIQGMDDAAGIKLVKAEVPLAEMFGYSTDLRSMSQGRATYSMEFKHYSEAPKSVAEAIIAKK</sequence>
<reference key="1">
    <citation type="journal article" date="2006" name="J. Bacteriol.">
        <title>The genome sequence of the obligately chemolithoautotrophic, facultatively anaerobic bacterium Thiobacillus denitrificans.</title>
        <authorList>
            <person name="Beller H.R."/>
            <person name="Chain P.S."/>
            <person name="Letain T.E."/>
            <person name="Chakicherla A."/>
            <person name="Larimer F.W."/>
            <person name="Richardson P.M."/>
            <person name="Coleman M.A."/>
            <person name="Wood A.P."/>
            <person name="Kelly D.P."/>
        </authorList>
    </citation>
    <scope>NUCLEOTIDE SEQUENCE [LARGE SCALE GENOMIC DNA]</scope>
    <source>
        <strain>ATCC 25259 / T1</strain>
    </source>
</reference>
<proteinExistence type="inferred from homology"/>
<name>EFG_THIDA</name>
<keyword id="KW-0963">Cytoplasm</keyword>
<keyword id="KW-0251">Elongation factor</keyword>
<keyword id="KW-0342">GTP-binding</keyword>
<keyword id="KW-0547">Nucleotide-binding</keyword>
<keyword id="KW-0648">Protein biosynthesis</keyword>
<keyword id="KW-1185">Reference proteome</keyword>
<protein>
    <recommendedName>
        <fullName evidence="1">Elongation factor G</fullName>
        <shortName evidence="1">EF-G</shortName>
    </recommendedName>
</protein>
<gene>
    <name evidence="1" type="primary">fusA</name>
    <name type="ordered locus">Tbd_0402</name>
</gene>
<organism>
    <name type="scientific">Thiobacillus denitrificans (strain ATCC 25259 / T1)</name>
    <dbReference type="NCBI Taxonomy" id="292415"/>
    <lineage>
        <taxon>Bacteria</taxon>
        <taxon>Pseudomonadati</taxon>
        <taxon>Pseudomonadota</taxon>
        <taxon>Betaproteobacteria</taxon>
        <taxon>Nitrosomonadales</taxon>
        <taxon>Thiobacillaceae</taxon>
        <taxon>Thiobacillus</taxon>
    </lineage>
</organism>